<feature type="chain" id="PRO_0000101268" description="DNA-directed DNA polymerase">
    <location>
        <begin position="1"/>
        <end position="704"/>
    </location>
</feature>
<feature type="region of interest" description="3'-5'exonuclease" evidence="2">
    <location>
        <begin position="1"/>
        <end position="187"/>
    </location>
</feature>
<feature type="region of interest" description="Polymerase" evidence="2">
    <location>
        <begin position="202"/>
        <end position="704"/>
    </location>
</feature>
<feature type="binding site" evidence="2">
    <location>
        <position position="5"/>
    </location>
    <ligand>
        <name>Mg(2+)</name>
        <dbReference type="ChEBI" id="CHEBI:18420"/>
        <label>1</label>
        <note>catalytic; for 3'-5' exonuclease activity</note>
    </ligand>
</feature>
<feature type="binding site" evidence="2">
    <location>
        <position position="5"/>
    </location>
    <ligand>
        <name>Mg(2+)</name>
        <dbReference type="ChEBI" id="CHEBI:18420"/>
        <label>2</label>
        <note>catalytic; for 3'-5' exonuclease activity</note>
    </ligand>
</feature>
<feature type="binding site" evidence="2">
    <location>
        <position position="7"/>
    </location>
    <ligand>
        <name>Mg(2+)</name>
        <dbReference type="ChEBI" id="CHEBI:18420"/>
        <label>2</label>
        <note>catalytic; for 3'-5' exonuclease activity</note>
    </ligand>
</feature>
<feature type="binding site" evidence="2">
    <location>
        <position position="174"/>
    </location>
    <ligand>
        <name>Mg(2+)</name>
        <dbReference type="ChEBI" id="CHEBI:18420"/>
        <label>2</label>
        <note>catalytic; for 3'-5' exonuclease activity</note>
    </ligand>
</feature>
<feature type="binding site" evidence="2">
    <location>
        <position position="475"/>
    </location>
    <ligand>
        <name>Mg(2+)</name>
        <dbReference type="ChEBI" id="CHEBI:18420"/>
        <label>3</label>
        <note>catalytic; for polymerase activity</note>
    </ligand>
</feature>
<feature type="binding site" evidence="2">
    <location>
        <position position="475"/>
    </location>
    <ligand>
        <name>Mg(2+)</name>
        <dbReference type="ChEBI" id="CHEBI:18420"/>
        <label>4</label>
        <note>catalytic; for polymerase activity</note>
    </ligand>
</feature>
<feature type="binding site" evidence="2">
    <location>
        <position position="476"/>
    </location>
    <ligand>
        <name>Mg(2+)</name>
        <dbReference type="ChEBI" id="CHEBI:18420"/>
        <label>4</label>
        <note>catalytic; for polymerase activity</note>
    </ligand>
</feature>
<feature type="binding site" evidence="2">
    <location>
        <position position="506"/>
    </location>
    <ligand>
        <name>substrate</name>
    </ligand>
</feature>
<feature type="binding site" evidence="2">
    <location>
        <position position="518"/>
    </location>
    <ligand>
        <name>substrate</name>
    </ligand>
</feature>
<feature type="binding site" evidence="2">
    <location>
        <position position="522"/>
    </location>
    <ligand>
        <name>substrate</name>
    </ligand>
</feature>
<feature type="binding site" evidence="2">
    <location>
        <position position="526"/>
    </location>
    <ligand>
        <name>substrate</name>
    </ligand>
</feature>
<feature type="binding site" evidence="2">
    <location>
        <position position="654"/>
    </location>
    <ligand>
        <name>Mg(2+)</name>
        <dbReference type="ChEBI" id="CHEBI:18420"/>
        <label>3</label>
        <note>catalytic; for polymerase activity</note>
    </ligand>
</feature>
<feature type="binding site" evidence="2">
    <location>
        <position position="654"/>
    </location>
    <ligand>
        <name>Mg(2+)</name>
        <dbReference type="ChEBI" id="CHEBI:18420"/>
        <label>4</label>
        <note>catalytic; for polymerase activity</note>
    </ligand>
</feature>
<organism>
    <name type="scientific">Enterobacteria phage T3</name>
    <name type="common">Bacteriophage T3</name>
    <dbReference type="NCBI Taxonomy" id="10759"/>
    <lineage>
        <taxon>Viruses</taxon>
        <taxon>Duplodnaviria</taxon>
        <taxon>Heunggongvirae</taxon>
        <taxon>Uroviricota</taxon>
        <taxon>Caudoviricetes</taxon>
        <taxon>Autographiviridae</taxon>
        <taxon>Studiervirinae</taxon>
        <taxon>Teetrevirus</taxon>
        <taxon>Teetrevirus T3</taxon>
    </lineage>
</organism>
<proteinExistence type="inferred from homology"/>
<sequence length="704" mass="79985">MLVSDIEANNLLEKVTKFHCGVIYDYRDGEYHSYRPGDFGAYLDALEAEVKRGGLIVFHNGHKYDVPALTKLAKLQLNREFHLPRENCIDTLVLSRLIHSNLKDTDMGLLRSGKLPGKRFGSHALEAWGYRLGEMKGEYKDDFKRMLEEQGEEYVDGMEWWNFNEEMMDYNVQDVVVTKALLEKLLSDKHYFPPEIDFTDVGYTTFWSESLEAVDVEHRAAWLLAKQERNGFPFDTKAIEELYVELAARRSELLRNLTETFGSWYQPKGGTEMFCHPRTGKPLPKYPRIKIPKVGGIFKKPKNKAQREGREPCELDTREYVAGAPYTPVEHVVFNPSSRDHIQKKLQEAGWVPTKFTDKGAPVVDDEVLEGVRVDDPEKQAAIDLIKEYLMIQKRIGQSAEGDKAWLRYVAEDGKIHGSVNPNGAVTGRATHAFPNLAQIPGVRSPYGEQCRAAFGAEHHLDGITGKPWVQAGIDASGLELRCLAHFMARFDNGEYAHEILNGDIHTKNQMAAELPTRDNAKTFIYGFLYGAGDEKIGQIVGAGKERGKELKKKFLENTPAIAALRESIQQTLVESSQWVAGEQQVKWKRRWIKGLDGRKVHVRSPHAALNTLLQSAGALICKLWIIKTEEMLVEKGLKHGWDGDFAYMAWIHDEIQVACRTEEIAKTVIEVAQEAMRWVGEHWNFRCLLDTEGKMGANWKECH</sequence>
<dbReference type="EC" id="2.7.7.7" evidence="1 2"/>
<dbReference type="EC" id="3.1.11.-" evidence="1 2"/>
<dbReference type="EMBL" id="X17255">
    <property type="protein sequence ID" value="CAA35140.1"/>
    <property type="molecule type" value="Genomic_DNA"/>
</dbReference>
<dbReference type="PIR" id="S07512">
    <property type="entry name" value="S07512"/>
</dbReference>
<dbReference type="RefSeq" id="NP_523320.1">
    <property type="nucleotide sequence ID" value="NC_003298.1"/>
</dbReference>
<dbReference type="SMR" id="P20311"/>
<dbReference type="KEGG" id="vg:927419"/>
<dbReference type="OrthoDB" id="3561at10239"/>
<dbReference type="GO" id="GO:0008408">
    <property type="term" value="F:3'-5' exonuclease activity"/>
    <property type="evidence" value="ECO:0007669"/>
    <property type="project" value="UniProtKB-UniRule"/>
</dbReference>
<dbReference type="GO" id="GO:0003677">
    <property type="term" value="F:DNA binding"/>
    <property type="evidence" value="ECO:0007669"/>
    <property type="project" value="UniProtKB-UniRule"/>
</dbReference>
<dbReference type="GO" id="GO:0003887">
    <property type="term" value="F:DNA-directed DNA polymerase activity"/>
    <property type="evidence" value="ECO:0007669"/>
    <property type="project" value="UniProtKB-UniRule"/>
</dbReference>
<dbReference type="GO" id="GO:0046872">
    <property type="term" value="F:metal ion binding"/>
    <property type="evidence" value="ECO:0007669"/>
    <property type="project" value="UniProtKB-KW"/>
</dbReference>
<dbReference type="GO" id="GO:0000166">
    <property type="term" value="F:nucleotide binding"/>
    <property type="evidence" value="ECO:0007669"/>
    <property type="project" value="UniProtKB-UniRule"/>
</dbReference>
<dbReference type="GO" id="GO:0006261">
    <property type="term" value="P:DNA-templated DNA replication"/>
    <property type="evidence" value="ECO:0007669"/>
    <property type="project" value="InterPro"/>
</dbReference>
<dbReference type="GO" id="GO:0006302">
    <property type="term" value="P:double-strand break repair"/>
    <property type="evidence" value="ECO:0007669"/>
    <property type="project" value="TreeGrafter"/>
</dbReference>
<dbReference type="GO" id="GO:0039693">
    <property type="term" value="P:viral DNA genome replication"/>
    <property type="evidence" value="ECO:0007669"/>
    <property type="project" value="UniProtKB-KW"/>
</dbReference>
<dbReference type="FunFam" id="1.20.1060.10:FF:000007">
    <property type="entry name" value="DNA-directed DNA polymerase"/>
    <property type="match status" value="1"/>
</dbReference>
<dbReference type="FunFam" id="3.30.420.10:FF:000164">
    <property type="entry name" value="DNA-directed DNA polymerase"/>
    <property type="match status" value="1"/>
</dbReference>
<dbReference type="Gene3D" id="3.30.70.370">
    <property type="match status" value="2"/>
</dbReference>
<dbReference type="Gene3D" id="3.30.420.10">
    <property type="entry name" value="Ribonuclease H-like superfamily/Ribonuclease H"/>
    <property type="match status" value="1"/>
</dbReference>
<dbReference type="Gene3D" id="1.20.1060.10">
    <property type="entry name" value="Taq DNA Polymerase, Chain T, domain 4"/>
    <property type="match status" value="1"/>
</dbReference>
<dbReference type="HAMAP" id="MF_04101">
    <property type="entry name" value="DPOL_T7"/>
    <property type="match status" value="1"/>
</dbReference>
<dbReference type="InterPro" id="IPR019760">
    <property type="entry name" value="DNA-dir_DNA_pol_A_CS"/>
</dbReference>
<dbReference type="InterPro" id="IPR001098">
    <property type="entry name" value="DNA-dir_DNA_pol_A_palm_dom"/>
</dbReference>
<dbReference type="InterPro" id="IPR043502">
    <property type="entry name" value="DNA/RNA_pol_sf"/>
</dbReference>
<dbReference type="InterPro" id="IPR002298">
    <property type="entry name" value="DNA_polymerase_A"/>
</dbReference>
<dbReference type="InterPro" id="IPR034699">
    <property type="entry name" value="DPOL_T7"/>
</dbReference>
<dbReference type="InterPro" id="IPR012337">
    <property type="entry name" value="RNaseH-like_sf"/>
</dbReference>
<dbReference type="InterPro" id="IPR036397">
    <property type="entry name" value="RNaseH_sf"/>
</dbReference>
<dbReference type="PANTHER" id="PTHR10133">
    <property type="entry name" value="DNA POLYMERASE I"/>
    <property type="match status" value="1"/>
</dbReference>
<dbReference type="PANTHER" id="PTHR10133:SF62">
    <property type="entry name" value="DNA POLYMERASE THETA"/>
    <property type="match status" value="1"/>
</dbReference>
<dbReference type="Pfam" id="PF00476">
    <property type="entry name" value="DNA_pol_A"/>
    <property type="match status" value="1"/>
</dbReference>
<dbReference type="PRINTS" id="PR00868">
    <property type="entry name" value="DNAPOLI"/>
</dbReference>
<dbReference type="SMART" id="SM00482">
    <property type="entry name" value="POLAc"/>
    <property type="match status" value="1"/>
</dbReference>
<dbReference type="SUPFAM" id="SSF56672">
    <property type="entry name" value="DNA/RNA polymerases"/>
    <property type="match status" value="1"/>
</dbReference>
<dbReference type="SUPFAM" id="SSF53098">
    <property type="entry name" value="Ribonuclease H-like"/>
    <property type="match status" value="1"/>
</dbReference>
<dbReference type="PROSITE" id="PS00447">
    <property type="entry name" value="DNA_POLYMERASE_A"/>
    <property type="match status" value="1"/>
</dbReference>
<accession>P20311</accession>
<gene>
    <name type="primary">5</name>
</gene>
<keyword id="KW-0235">DNA replication</keyword>
<keyword id="KW-0238">DNA-binding</keyword>
<keyword id="KW-0239">DNA-directed DNA polymerase</keyword>
<keyword id="KW-0269">Exonuclease</keyword>
<keyword id="KW-0378">Hydrolase</keyword>
<keyword id="KW-0460">Magnesium</keyword>
<keyword id="KW-0479">Metal-binding</keyword>
<keyword id="KW-0511">Multifunctional enzyme</keyword>
<keyword id="KW-0540">Nuclease</keyword>
<keyword id="KW-0548">Nucleotidyltransferase</keyword>
<keyword id="KW-0808">Transferase</keyword>
<keyword id="KW-1194">Viral DNA replication</keyword>
<organismHost>
    <name type="scientific">Escherichia coli</name>
    <dbReference type="NCBI Taxonomy" id="562"/>
</organismHost>
<name>DPOL_BPT3</name>
<comment type="function">
    <text evidence="2">Replicates viral genomic DNA. This polymerase possesses two enzymatic activities: DNA synthesis (polymerase) and an exonucleolytic activity that degrades single-stranded DNA in the 3'-5' direction.</text>
</comment>
<comment type="catalytic activity">
    <reaction evidence="2">
        <text>DNA(n) + a 2'-deoxyribonucleoside 5'-triphosphate = DNA(n+1) + diphosphate</text>
        <dbReference type="Rhea" id="RHEA:22508"/>
        <dbReference type="Rhea" id="RHEA-COMP:17339"/>
        <dbReference type="Rhea" id="RHEA-COMP:17340"/>
        <dbReference type="ChEBI" id="CHEBI:33019"/>
        <dbReference type="ChEBI" id="CHEBI:61560"/>
        <dbReference type="ChEBI" id="CHEBI:173112"/>
        <dbReference type="EC" id="2.7.7.7"/>
    </reaction>
</comment>
<comment type="cofactor">
    <cofactor evidence="2">
        <name>Mg(2+)</name>
        <dbReference type="ChEBI" id="CHEBI:18420"/>
    </cofactor>
</comment>
<comment type="subunit">
    <text evidence="1">Composed of two subunits. One is encoded by the phage and the other is encoded by the host thioredoxin.</text>
</comment>
<comment type="similarity">
    <text evidence="2">Belongs to the DNA polymerase type-A family.</text>
</comment>
<evidence type="ECO:0000250" key="1">
    <source>
        <dbReference type="UniProtKB" id="P00581"/>
    </source>
</evidence>
<evidence type="ECO:0000255" key="2">
    <source>
        <dbReference type="HAMAP-Rule" id="MF_04101"/>
    </source>
</evidence>
<protein>
    <recommendedName>
        <fullName evidence="2">DNA-directed DNA polymerase</fullName>
        <ecNumber evidence="1 2">2.7.7.7</ecNumber>
        <ecNumber evidence="1 2">3.1.11.-</ecNumber>
    </recommendedName>
    <alternativeName>
        <fullName>Gene product 5</fullName>
        <shortName>Gp5</shortName>
    </alternativeName>
</protein>
<reference key="1">
    <citation type="journal article" date="1989" name="J. Mol. Biol.">
        <title>Sequence of bacteriophage T3 DNA from gene 2.5 through gene 9.</title>
        <authorList>
            <person name="Beck P.J."/>
            <person name="Gonzalez S."/>
            <person name="Ward C.L."/>
            <person name="Molineux I.J."/>
        </authorList>
    </citation>
    <scope>NUCLEOTIDE SEQUENCE [GENOMIC DNA]</scope>
    <source>
        <strain>Luria</strain>
    </source>
</reference>